<proteinExistence type="inferred from homology"/>
<protein>
    <recommendedName>
        <fullName evidence="1">Large ribosomal subunit protein bL12</fullName>
    </recommendedName>
    <alternativeName>
        <fullName evidence="2">50S ribosomal protein L7/L12</fullName>
    </alternativeName>
</protein>
<comment type="function">
    <text evidence="1">Forms part of the ribosomal stalk which helps the ribosome interact with GTP-bound translation factors. Is thus essential for accurate translation.</text>
</comment>
<comment type="subunit">
    <text evidence="1">Homodimer. Part of the ribosomal stalk of the 50S ribosomal subunit. Forms a multimeric L10(L12)X complex, where L10 forms an elongated spine to which 2 to 4 L12 dimers bind in a sequential fashion. Binds GTP-bound translation factors.</text>
</comment>
<comment type="similarity">
    <text evidence="1">Belongs to the bacterial ribosomal protein bL12 family.</text>
</comment>
<name>RL7_DESAL</name>
<sequence length="126" mass="13305">MADITKEDVLEFIANMTVLELSELIKDIEEKFGVSAAAPVAAVAMAGPAAADAEEEKTEFDVILLSAGDKKIQVIKEVRAITGLGLKEAKALVEEAPKAVKEGIAKEDAEKVKEQLEGAGAQVDIK</sequence>
<reference key="1">
    <citation type="journal article" date="2012" name="Environ. Microbiol.">
        <title>The genome sequence of Desulfatibacillum alkenivorans AK-01: a blueprint for anaerobic alkane oxidation.</title>
        <authorList>
            <person name="Callaghan A.V."/>
            <person name="Morris B.E."/>
            <person name="Pereira I.A."/>
            <person name="McInerney M.J."/>
            <person name="Austin R.N."/>
            <person name="Groves J.T."/>
            <person name="Kukor J.J."/>
            <person name="Suflita J.M."/>
            <person name="Young L.Y."/>
            <person name="Zylstra G.J."/>
            <person name="Wawrik B."/>
        </authorList>
    </citation>
    <scope>NUCLEOTIDE SEQUENCE [LARGE SCALE GENOMIC DNA]</scope>
    <source>
        <strain>AK-01</strain>
    </source>
</reference>
<gene>
    <name evidence="1" type="primary">rplL</name>
    <name type="ordered locus">Dalk_1922</name>
</gene>
<keyword id="KW-1185">Reference proteome</keyword>
<keyword id="KW-0687">Ribonucleoprotein</keyword>
<keyword id="KW-0689">Ribosomal protein</keyword>
<dbReference type="EMBL" id="CP001322">
    <property type="protein sequence ID" value="ACL03619.1"/>
    <property type="molecule type" value="Genomic_DNA"/>
</dbReference>
<dbReference type="SMR" id="B8FEU2"/>
<dbReference type="KEGG" id="dal:Dalk_1922"/>
<dbReference type="eggNOG" id="COG0222">
    <property type="taxonomic scope" value="Bacteria"/>
</dbReference>
<dbReference type="HOGENOM" id="CLU_086499_3_0_7"/>
<dbReference type="Proteomes" id="UP000000739">
    <property type="component" value="Chromosome"/>
</dbReference>
<dbReference type="GO" id="GO:0022625">
    <property type="term" value="C:cytosolic large ribosomal subunit"/>
    <property type="evidence" value="ECO:0007669"/>
    <property type="project" value="TreeGrafter"/>
</dbReference>
<dbReference type="GO" id="GO:0003729">
    <property type="term" value="F:mRNA binding"/>
    <property type="evidence" value="ECO:0007669"/>
    <property type="project" value="TreeGrafter"/>
</dbReference>
<dbReference type="GO" id="GO:0003735">
    <property type="term" value="F:structural constituent of ribosome"/>
    <property type="evidence" value="ECO:0007669"/>
    <property type="project" value="InterPro"/>
</dbReference>
<dbReference type="GO" id="GO:0006412">
    <property type="term" value="P:translation"/>
    <property type="evidence" value="ECO:0007669"/>
    <property type="project" value="UniProtKB-UniRule"/>
</dbReference>
<dbReference type="CDD" id="cd00387">
    <property type="entry name" value="Ribosomal_L7_L12"/>
    <property type="match status" value="1"/>
</dbReference>
<dbReference type="FunFam" id="3.30.1390.10:FF:000001">
    <property type="entry name" value="50S ribosomal protein L7/L12"/>
    <property type="match status" value="1"/>
</dbReference>
<dbReference type="Gene3D" id="3.30.1390.10">
    <property type="match status" value="1"/>
</dbReference>
<dbReference type="Gene3D" id="1.20.5.710">
    <property type="entry name" value="Single helix bin"/>
    <property type="match status" value="1"/>
</dbReference>
<dbReference type="HAMAP" id="MF_00368">
    <property type="entry name" value="Ribosomal_bL12"/>
    <property type="match status" value="1"/>
</dbReference>
<dbReference type="InterPro" id="IPR000206">
    <property type="entry name" value="Ribosomal_bL12"/>
</dbReference>
<dbReference type="InterPro" id="IPR013823">
    <property type="entry name" value="Ribosomal_bL12_C"/>
</dbReference>
<dbReference type="InterPro" id="IPR014719">
    <property type="entry name" value="Ribosomal_bL12_C/ClpS-like"/>
</dbReference>
<dbReference type="InterPro" id="IPR008932">
    <property type="entry name" value="Ribosomal_bL12_oligo"/>
</dbReference>
<dbReference type="InterPro" id="IPR036235">
    <property type="entry name" value="Ribosomal_bL12_oligo_N_sf"/>
</dbReference>
<dbReference type="NCBIfam" id="TIGR00855">
    <property type="entry name" value="L12"/>
    <property type="match status" value="1"/>
</dbReference>
<dbReference type="PANTHER" id="PTHR45987">
    <property type="entry name" value="39S RIBOSOMAL PROTEIN L12"/>
    <property type="match status" value="1"/>
</dbReference>
<dbReference type="PANTHER" id="PTHR45987:SF4">
    <property type="entry name" value="LARGE RIBOSOMAL SUBUNIT PROTEIN BL12M"/>
    <property type="match status" value="1"/>
</dbReference>
<dbReference type="Pfam" id="PF00542">
    <property type="entry name" value="Ribosomal_L12"/>
    <property type="match status" value="1"/>
</dbReference>
<dbReference type="Pfam" id="PF16320">
    <property type="entry name" value="Ribosomal_L12_N"/>
    <property type="match status" value="1"/>
</dbReference>
<dbReference type="SUPFAM" id="SSF54736">
    <property type="entry name" value="ClpS-like"/>
    <property type="match status" value="1"/>
</dbReference>
<dbReference type="SUPFAM" id="SSF48300">
    <property type="entry name" value="Ribosomal protein L7/12, oligomerisation (N-terminal) domain"/>
    <property type="match status" value="1"/>
</dbReference>
<feature type="chain" id="PRO_1000121424" description="Large ribosomal subunit protein bL12">
    <location>
        <begin position="1"/>
        <end position="126"/>
    </location>
</feature>
<organism>
    <name type="scientific">Desulfatibacillum aliphaticivorans</name>
    <dbReference type="NCBI Taxonomy" id="218208"/>
    <lineage>
        <taxon>Bacteria</taxon>
        <taxon>Pseudomonadati</taxon>
        <taxon>Thermodesulfobacteriota</taxon>
        <taxon>Desulfobacteria</taxon>
        <taxon>Desulfobacterales</taxon>
        <taxon>Desulfatibacillaceae</taxon>
        <taxon>Desulfatibacillum</taxon>
    </lineage>
</organism>
<accession>B8FEU2</accession>
<evidence type="ECO:0000255" key="1">
    <source>
        <dbReference type="HAMAP-Rule" id="MF_00368"/>
    </source>
</evidence>
<evidence type="ECO:0000305" key="2"/>